<reference key="1">
    <citation type="submission" date="2006-09" db="EMBL/GenBank/DDBJ databases">
        <authorList>
            <consortium name="The Klebsiella pneumonia Genome Sequencing Project"/>
            <person name="McClelland M."/>
            <person name="Sanderson E.K."/>
            <person name="Spieth J."/>
            <person name="Clifton W.S."/>
            <person name="Latreille P."/>
            <person name="Sabo A."/>
            <person name="Pepin K."/>
            <person name="Bhonagiri V."/>
            <person name="Porwollik S."/>
            <person name="Ali J."/>
            <person name="Wilson R.K."/>
        </authorList>
    </citation>
    <scope>NUCLEOTIDE SEQUENCE [LARGE SCALE GENOMIC DNA]</scope>
    <source>
        <strain>ATCC 700721 / MGH 78578</strain>
    </source>
</reference>
<keyword id="KW-0030">Aminoacyl-tRNA synthetase</keyword>
<keyword id="KW-0067">ATP-binding</keyword>
<keyword id="KW-0963">Cytoplasm</keyword>
<keyword id="KW-0436">Ligase</keyword>
<keyword id="KW-0479">Metal-binding</keyword>
<keyword id="KW-0547">Nucleotide-binding</keyword>
<keyword id="KW-0648">Protein biosynthesis</keyword>
<keyword id="KW-0694">RNA-binding</keyword>
<keyword id="KW-0820">tRNA-binding</keyword>
<keyword id="KW-0862">Zinc</keyword>
<organism>
    <name type="scientific">Klebsiella pneumoniae subsp. pneumoniae (strain ATCC 700721 / MGH 78578)</name>
    <dbReference type="NCBI Taxonomy" id="272620"/>
    <lineage>
        <taxon>Bacteria</taxon>
        <taxon>Pseudomonadati</taxon>
        <taxon>Pseudomonadota</taxon>
        <taxon>Gammaproteobacteria</taxon>
        <taxon>Enterobacterales</taxon>
        <taxon>Enterobacteriaceae</taxon>
        <taxon>Klebsiella/Raoultella group</taxon>
        <taxon>Klebsiella</taxon>
        <taxon>Klebsiella pneumoniae complex</taxon>
    </lineage>
</organism>
<gene>
    <name evidence="1" type="primary">alaS</name>
    <name type="ordered locus">KPN78578_29690</name>
    <name type="ORF">KPN_03029</name>
</gene>
<proteinExistence type="inferred from homology"/>
<accession>A6TCV9</accession>
<feature type="chain" id="PRO_0000347641" description="Alanine--tRNA ligase">
    <location>
        <begin position="1"/>
        <end position="875"/>
    </location>
</feature>
<feature type="binding site" evidence="1">
    <location>
        <position position="564"/>
    </location>
    <ligand>
        <name>Zn(2+)</name>
        <dbReference type="ChEBI" id="CHEBI:29105"/>
    </ligand>
</feature>
<feature type="binding site" evidence="1">
    <location>
        <position position="568"/>
    </location>
    <ligand>
        <name>Zn(2+)</name>
        <dbReference type="ChEBI" id="CHEBI:29105"/>
    </ligand>
</feature>
<feature type="binding site" evidence="1">
    <location>
        <position position="666"/>
    </location>
    <ligand>
        <name>Zn(2+)</name>
        <dbReference type="ChEBI" id="CHEBI:29105"/>
    </ligand>
</feature>
<feature type="binding site" evidence="1">
    <location>
        <position position="670"/>
    </location>
    <ligand>
        <name>Zn(2+)</name>
        <dbReference type="ChEBI" id="CHEBI:29105"/>
    </ligand>
</feature>
<comment type="function">
    <text evidence="1">Catalyzes the attachment of alanine to tRNA(Ala) in a two-step reaction: alanine is first activated by ATP to form Ala-AMP and then transferred to the acceptor end of tRNA(Ala). Also edits incorrectly charged Ser-tRNA(Ala) and Gly-tRNA(Ala) via its editing domain.</text>
</comment>
<comment type="catalytic activity">
    <reaction evidence="1">
        <text>tRNA(Ala) + L-alanine + ATP = L-alanyl-tRNA(Ala) + AMP + diphosphate</text>
        <dbReference type="Rhea" id="RHEA:12540"/>
        <dbReference type="Rhea" id="RHEA-COMP:9657"/>
        <dbReference type="Rhea" id="RHEA-COMP:9923"/>
        <dbReference type="ChEBI" id="CHEBI:30616"/>
        <dbReference type="ChEBI" id="CHEBI:33019"/>
        <dbReference type="ChEBI" id="CHEBI:57972"/>
        <dbReference type="ChEBI" id="CHEBI:78442"/>
        <dbReference type="ChEBI" id="CHEBI:78497"/>
        <dbReference type="ChEBI" id="CHEBI:456215"/>
        <dbReference type="EC" id="6.1.1.7"/>
    </reaction>
</comment>
<comment type="cofactor">
    <cofactor evidence="1">
        <name>Zn(2+)</name>
        <dbReference type="ChEBI" id="CHEBI:29105"/>
    </cofactor>
    <text evidence="1">Binds 1 zinc ion per subunit.</text>
</comment>
<comment type="subunit">
    <text evidence="1">Homotetramer.</text>
</comment>
<comment type="subcellular location">
    <subcellularLocation>
        <location evidence="1">Cytoplasm</location>
    </subcellularLocation>
</comment>
<comment type="domain">
    <text evidence="1">Consists of three domains; the N-terminal catalytic domain, the editing domain and the C-terminal C-Ala domain. The editing domain removes incorrectly charged amino acids, while the C-Ala domain, along with tRNA(Ala), serves as a bridge to cooperatively bring together the editing and aminoacylation centers thus stimulating deacylation of misacylated tRNAs.</text>
</comment>
<comment type="similarity">
    <text evidence="1">Belongs to the class-II aminoacyl-tRNA synthetase family.</text>
</comment>
<evidence type="ECO:0000255" key="1">
    <source>
        <dbReference type="HAMAP-Rule" id="MF_00036"/>
    </source>
</evidence>
<name>SYA_KLEP7</name>
<dbReference type="EC" id="6.1.1.7" evidence="1"/>
<dbReference type="EMBL" id="CP000647">
    <property type="protein sequence ID" value="ABR78430.1"/>
    <property type="molecule type" value="Genomic_DNA"/>
</dbReference>
<dbReference type="RefSeq" id="WP_015958865.1">
    <property type="nucleotide sequence ID" value="NC_009648.1"/>
</dbReference>
<dbReference type="SMR" id="A6TCV9"/>
<dbReference type="STRING" id="272620.KPN_03029"/>
<dbReference type="jPOST" id="A6TCV9"/>
<dbReference type="PaxDb" id="272620-KPN_03029"/>
<dbReference type="EnsemblBacteria" id="ABR78430">
    <property type="protein sequence ID" value="ABR78430"/>
    <property type="gene ID" value="KPN_03029"/>
</dbReference>
<dbReference type="KEGG" id="kpn:KPN_03029"/>
<dbReference type="HOGENOM" id="CLU_004485_1_1_6"/>
<dbReference type="Proteomes" id="UP000000265">
    <property type="component" value="Chromosome"/>
</dbReference>
<dbReference type="GO" id="GO:0005829">
    <property type="term" value="C:cytosol"/>
    <property type="evidence" value="ECO:0007669"/>
    <property type="project" value="TreeGrafter"/>
</dbReference>
<dbReference type="GO" id="GO:0004813">
    <property type="term" value="F:alanine-tRNA ligase activity"/>
    <property type="evidence" value="ECO:0007669"/>
    <property type="project" value="UniProtKB-UniRule"/>
</dbReference>
<dbReference type="GO" id="GO:0002161">
    <property type="term" value="F:aminoacyl-tRNA deacylase activity"/>
    <property type="evidence" value="ECO:0007669"/>
    <property type="project" value="TreeGrafter"/>
</dbReference>
<dbReference type="GO" id="GO:0005524">
    <property type="term" value="F:ATP binding"/>
    <property type="evidence" value="ECO:0007669"/>
    <property type="project" value="UniProtKB-UniRule"/>
</dbReference>
<dbReference type="GO" id="GO:0000049">
    <property type="term" value="F:tRNA binding"/>
    <property type="evidence" value="ECO:0007669"/>
    <property type="project" value="UniProtKB-KW"/>
</dbReference>
<dbReference type="GO" id="GO:0008270">
    <property type="term" value="F:zinc ion binding"/>
    <property type="evidence" value="ECO:0007669"/>
    <property type="project" value="UniProtKB-UniRule"/>
</dbReference>
<dbReference type="GO" id="GO:0006419">
    <property type="term" value="P:alanyl-tRNA aminoacylation"/>
    <property type="evidence" value="ECO:0007669"/>
    <property type="project" value="UniProtKB-UniRule"/>
</dbReference>
<dbReference type="GO" id="GO:0045892">
    <property type="term" value="P:negative regulation of DNA-templated transcription"/>
    <property type="evidence" value="ECO:0007669"/>
    <property type="project" value="TreeGrafter"/>
</dbReference>
<dbReference type="CDD" id="cd00673">
    <property type="entry name" value="AlaRS_core"/>
    <property type="match status" value="1"/>
</dbReference>
<dbReference type="FunFam" id="2.40.30.130:FF:000001">
    <property type="entry name" value="Alanine--tRNA ligase"/>
    <property type="match status" value="1"/>
</dbReference>
<dbReference type="FunFam" id="3.10.310.40:FF:000001">
    <property type="entry name" value="Alanine--tRNA ligase"/>
    <property type="match status" value="1"/>
</dbReference>
<dbReference type="FunFam" id="3.30.54.20:FF:000001">
    <property type="entry name" value="Alanine--tRNA ligase"/>
    <property type="match status" value="1"/>
</dbReference>
<dbReference type="FunFam" id="3.30.930.10:FF:000004">
    <property type="entry name" value="Alanine--tRNA ligase"/>
    <property type="match status" value="1"/>
</dbReference>
<dbReference type="FunFam" id="3.30.980.10:FF:000004">
    <property type="entry name" value="Alanine--tRNA ligase, cytoplasmic"/>
    <property type="match status" value="1"/>
</dbReference>
<dbReference type="Gene3D" id="2.40.30.130">
    <property type="match status" value="1"/>
</dbReference>
<dbReference type="Gene3D" id="3.10.310.40">
    <property type="match status" value="1"/>
</dbReference>
<dbReference type="Gene3D" id="3.30.54.20">
    <property type="match status" value="1"/>
</dbReference>
<dbReference type="Gene3D" id="6.10.250.550">
    <property type="match status" value="1"/>
</dbReference>
<dbReference type="Gene3D" id="3.30.930.10">
    <property type="entry name" value="Bira Bifunctional Protein, Domain 2"/>
    <property type="match status" value="1"/>
</dbReference>
<dbReference type="Gene3D" id="3.30.980.10">
    <property type="entry name" value="Threonyl-trna Synthetase, Chain A, domain 2"/>
    <property type="match status" value="1"/>
</dbReference>
<dbReference type="HAMAP" id="MF_00036_B">
    <property type="entry name" value="Ala_tRNA_synth_B"/>
    <property type="match status" value="1"/>
</dbReference>
<dbReference type="InterPro" id="IPR045864">
    <property type="entry name" value="aa-tRNA-synth_II/BPL/LPL"/>
</dbReference>
<dbReference type="InterPro" id="IPR002318">
    <property type="entry name" value="Ala-tRNA-lgiase_IIc"/>
</dbReference>
<dbReference type="InterPro" id="IPR018162">
    <property type="entry name" value="Ala-tRNA-ligase_IIc_anticod-bd"/>
</dbReference>
<dbReference type="InterPro" id="IPR018165">
    <property type="entry name" value="Ala-tRNA-synth_IIc_core"/>
</dbReference>
<dbReference type="InterPro" id="IPR018164">
    <property type="entry name" value="Ala-tRNA-synth_IIc_N"/>
</dbReference>
<dbReference type="InterPro" id="IPR050058">
    <property type="entry name" value="Ala-tRNA_ligase"/>
</dbReference>
<dbReference type="InterPro" id="IPR023033">
    <property type="entry name" value="Ala_tRNA_ligase_euk/bac"/>
</dbReference>
<dbReference type="InterPro" id="IPR003156">
    <property type="entry name" value="DHHA1_dom"/>
</dbReference>
<dbReference type="InterPro" id="IPR018163">
    <property type="entry name" value="Thr/Ala-tRNA-synth_IIc_edit"/>
</dbReference>
<dbReference type="InterPro" id="IPR009000">
    <property type="entry name" value="Transl_B-barrel_sf"/>
</dbReference>
<dbReference type="InterPro" id="IPR012947">
    <property type="entry name" value="tRNA_SAD"/>
</dbReference>
<dbReference type="NCBIfam" id="TIGR00344">
    <property type="entry name" value="alaS"/>
    <property type="match status" value="1"/>
</dbReference>
<dbReference type="PANTHER" id="PTHR11777:SF9">
    <property type="entry name" value="ALANINE--TRNA LIGASE, CYTOPLASMIC"/>
    <property type="match status" value="1"/>
</dbReference>
<dbReference type="PANTHER" id="PTHR11777">
    <property type="entry name" value="ALANYL-TRNA SYNTHETASE"/>
    <property type="match status" value="1"/>
</dbReference>
<dbReference type="Pfam" id="PF02272">
    <property type="entry name" value="DHHA1"/>
    <property type="match status" value="1"/>
</dbReference>
<dbReference type="Pfam" id="PF01411">
    <property type="entry name" value="tRNA-synt_2c"/>
    <property type="match status" value="1"/>
</dbReference>
<dbReference type="Pfam" id="PF07973">
    <property type="entry name" value="tRNA_SAD"/>
    <property type="match status" value="1"/>
</dbReference>
<dbReference type="PRINTS" id="PR00980">
    <property type="entry name" value="TRNASYNTHALA"/>
</dbReference>
<dbReference type="SMART" id="SM00863">
    <property type="entry name" value="tRNA_SAD"/>
    <property type="match status" value="1"/>
</dbReference>
<dbReference type="SUPFAM" id="SSF55681">
    <property type="entry name" value="Class II aaRS and biotin synthetases"/>
    <property type="match status" value="1"/>
</dbReference>
<dbReference type="SUPFAM" id="SSF101353">
    <property type="entry name" value="Putative anticodon-binding domain of alanyl-tRNA synthetase (AlaRS)"/>
    <property type="match status" value="1"/>
</dbReference>
<dbReference type="SUPFAM" id="SSF55186">
    <property type="entry name" value="ThrRS/AlaRS common domain"/>
    <property type="match status" value="1"/>
</dbReference>
<dbReference type="SUPFAM" id="SSF50447">
    <property type="entry name" value="Translation proteins"/>
    <property type="match status" value="1"/>
</dbReference>
<dbReference type="PROSITE" id="PS50860">
    <property type="entry name" value="AA_TRNA_LIGASE_II_ALA"/>
    <property type="match status" value="1"/>
</dbReference>
<sequence>MSKSTAEIRQAFLDFFHSKGHQVVASSSLVPHNDPTLLFTNAGMNQFKDVFLGLDKRNYSRATTAQRCVRAGGKHNDLENVGYTARHHTFFEMLGNFSFGDYFKQDAIKYAWELLTGENWFALPKEKLWVTVYETDDEAFDIWANEVGVPRERIIRIGDNKGAPFASDNFWQMGDTGPCGPCTEIFFDHGDHIWGGPPGSPEEDGDRYIEIWNIVFMQFNRQADGTMEPLPKPSVDTGMGLERIAAVLQHVNSNYDIDLFRDLIASVAKVTGATDLTNKSLRVIADHIRSCAFLVADGVIPSNENRGYVLRRIIRRAIRHGNMLGAKDTFFWKLVAPLIDVMGSAGDELKQQQAQVEQVLKTEEEQFARTLERGLALLDEELSKLKGDTLDGETAFRLYDTYGFPVDLTADVCRERNIKVDEAGFEAAMEEQRRRARESSGFGADYNAMIRVDGASEFKGYDHLELNGKVTALFIDGKAVDSVSAGQEAVVILDQTPFYAESGGQVGDKGELKGAGFSFAVSDTQKYGQAIGHIGKVASGSLKVGDAVQADVDEARRHRIRLNHSATHLMHAALRQVLGTHVAQKGSLVNDKALRFDFSHFEAMKPEEIRAVEDLVNAQIRRNLAIETNIMDIDAARASGAMALFGEKYDDRVRVLRMGDFSTELCGGTHAARTGDIGLFRITSESGTAAGVRRIEAVTGEGAMAILHAQSDQLNDIAQLLKGDSHNLGEKVRAALERTRQLEKELQQLKEQAAAQESANLSSKAEEINGVKLLVSELTGVEPKMLRTMVDDLKNQLGSTIVVLATVADGKVSLIAGVSKDVTDRVKAGELVGMVAQQVGGKGGGRPDMAQAGGTDASALPAALASVKGWVSAKL</sequence>
<protein>
    <recommendedName>
        <fullName evidence="1">Alanine--tRNA ligase</fullName>
        <ecNumber evidence="1">6.1.1.7</ecNumber>
    </recommendedName>
    <alternativeName>
        <fullName evidence="1">Alanyl-tRNA synthetase</fullName>
        <shortName evidence="1">AlaRS</shortName>
    </alternativeName>
</protein>